<gene>
    <name evidence="4" type="primary">KIN7G</name>
    <name evidence="5" type="ordered locus">Os06g0206700</name>
    <name evidence="4" type="ordered locus">LOC_Os06g10480</name>
    <name evidence="6" type="ORF">OsJ_20526</name>
</gene>
<evidence type="ECO:0000255" key="1"/>
<evidence type="ECO:0000255" key="2">
    <source>
        <dbReference type="PROSITE-ProRule" id="PRU00283"/>
    </source>
</evidence>
<evidence type="ECO:0000256" key="3">
    <source>
        <dbReference type="SAM" id="MobiDB-lite"/>
    </source>
</evidence>
<evidence type="ECO:0000305" key="4"/>
<evidence type="ECO:0000312" key="5">
    <source>
        <dbReference type="EMBL" id="BAS96703.1"/>
    </source>
</evidence>
<evidence type="ECO:0000312" key="6">
    <source>
        <dbReference type="EMBL" id="EEE65294.1"/>
    </source>
</evidence>
<accession>B9FS33</accession>
<accession>A0A0P0WUC1</accession>
<organism>
    <name type="scientific">Oryza sativa subsp. japonica</name>
    <name type="common">Rice</name>
    <dbReference type="NCBI Taxonomy" id="39947"/>
    <lineage>
        <taxon>Eukaryota</taxon>
        <taxon>Viridiplantae</taxon>
        <taxon>Streptophyta</taxon>
        <taxon>Embryophyta</taxon>
        <taxon>Tracheophyta</taxon>
        <taxon>Spermatophyta</taxon>
        <taxon>Magnoliopsida</taxon>
        <taxon>Liliopsida</taxon>
        <taxon>Poales</taxon>
        <taxon>Poaceae</taxon>
        <taxon>BOP clade</taxon>
        <taxon>Oryzoideae</taxon>
        <taxon>Oryzeae</taxon>
        <taxon>Oryzinae</taxon>
        <taxon>Oryza</taxon>
        <taxon>Oryza sativa</taxon>
    </lineage>
</organism>
<reference key="1">
    <citation type="journal article" date="2005" name="Nature">
        <title>The map-based sequence of the rice genome.</title>
        <authorList>
            <consortium name="International rice genome sequencing project (IRGSP)"/>
        </authorList>
    </citation>
    <scope>NUCLEOTIDE SEQUENCE [LARGE SCALE GENOMIC DNA]</scope>
    <source>
        <strain>cv. Nipponbare</strain>
    </source>
</reference>
<reference key="2">
    <citation type="journal article" date="2013" name="Rice">
        <title>Improvement of the Oryza sativa Nipponbare reference genome using next generation sequence and optical map data.</title>
        <authorList>
            <person name="Kawahara Y."/>
            <person name="de la Bastide M."/>
            <person name="Hamilton J.P."/>
            <person name="Kanamori H."/>
            <person name="McCombie W.R."/>
            <person name="Ouyang S."/>
            <person name="Schwartz D.C."/>
            <person name="Tanaka T."/>
            <person name="Wu J."/>
            <person name="Zhou S."/>
            <person name="Childs K.L."/>
            <person name="Davidson R.M."/>
            <person name="Lin H."/>
            <person name="Quesada-Ocampo L."/>
            <person name="Vaillancourt B."/>
            <person name="Sakai H."/>
            <person name="Lee S.S."/>
            <person name="Kim J."/>
            <person name="Numa H."/>
            <person name="Itoh T."/>
            <person name="Buell C.R."/>
            <person name="Matsumoto T."/>
        </authorList>
    </citation>
    <scope>GENOME REANNOTATION</scope>
    <source>
        <strain>cv. Nipponbare</strain>
    </source>
</reference>
<reference key="3">
    <citation type="journal article" date="2005" name="PLoS Biol.">
        <title>The genomes of Oryza sativa: a history of duplications.</title>
        <authorList>
            <person name="Yu J."/>
            <person name="Wang J."/>
            <person name="Lin W."/>
            <person name="Li S."/>
            <person name="Li H."/>
            <person name="Zhou J."/>
            <person name="Ni P."/>
            <person name="Dong W."/>
            <person name="Hu S."/>
            <person name="Zeng C."/>
            <person name="Zhang J."/>
            <person name="Zhang Y."/>
            <person name="Li R."/>
            <person name="Xu Z."/>
            <person name="Li S."/>
            <person name="Li X."/>
            <person name="Zheng H."/>
            <person name="Cong L."/>
            <person name="Lin L."/>
            <person name="Yin J."/>
            <person name="Geng J."/>
            <person name="Li G."/>
            <person name="Shi J."/>
            <person name="Liu J."/>
            <person name="Lv H."/>
            <person name="Li J."/>
            <person name="Wang J."/>
            <person name="Deng Y."/>
            <person name="Ran L."/>
            <person name="Shi X."/>
            <person name="Wang X."/>
            <person name="Wu Q."/>
            <person name="Li C."/>
            <person name="Ren X."/>
            <person name="Wang J."/>
            <person name="Wang X."/>
            <person name="Li D."/>
            <person name="Liu D."/>
            <person name="Zhang X."/>
            <person name="Ji Z."/>
            <person name="Zhao W."/>
            <person name="Sun Y."/>
            <person name="Zhang Z."/>
            <person name="Bao J."/>
            <person name="Han Y."/>
            <person name="Dong L."/>
            <person name="Ji J."/>
            <person name="Chen P."/>
            <person name="Wu S."/>
            <person name="Liu J."/>
            <person name="Xiao Y."/>
            <person name="Bu D."/>
            <person name="Tan J."/>
            <person name="Yang L."/>
            <person name="Ye C."/>
            <person name="Zhang J."/>
            <person name="Xu J."/>
            <person name="Zhou Y."/>
            <person name="Yu Y."/>
            <person name="Zhang B."/>
            <person name="Zhuang S."/>
            <person name="Wei H."/>
            <person name="Liu B."/>
            <person name="Lei M."/>
            <person name="Yu H."/>
            <person name="Li Y."/>
            <person name="Xu H."/>
            <person name="Wei S."/>
            <person name="He X."/>
            <person name="Fang L."/>
            <person name="Zhang Z."/>
            <person name="Zhang Y."/>
            <person name="Huang X."/>
            <person name="Su Z."/>
            <person name="Tong W."/>
            <person name="Li J."/>
            <person name="Tong Z."/>
            <person name="Li S."/>
            <person name="Ye J."/>
            <person name="Wang L."/>
            <person name="Fang L."/>
            <person name="Lei T."/>
            <person name="Chen C.-S."/>
            <person name="Chen H.-C."/>
            <person name="Xu Z."/>
            <person name="Li H."/>
            <person name="Huang H."/>
            <person name="Zhang F."/>
            <person name="Xu H."/>
            <person name="Li N."/>
            <person name="Zhao C."/>
            <person name="Li S."/>
            <person name="Dong L."/>
            <person name="Huang Y."/>
            <person name="Li L."/>
            <person name="Xi Y."/>
            <person name="Qi Q."/>
            <person name="Li W."/>
            <person name="Zhang B."/>
            <person name="Hu W."/>
            <person name="Zhang Y."/>
            <person name="Tian X."/>
            <person name="Jiao Y."/>
            <person name="Liang X."/>
            <person name="Jin J."/>
            <person name="Gao L."/>
            <person name="Zheng W."/>
            <person name="Hao B."/>
            <person name="Liu S.-M."/>
            <person name="Wang W."/>
            <person name="Yuan L."/>
            <person name="Cao M."/>
            <person name="McDermott J."/>
            <person name="Samudrala R."/>
            <person name="Wang J."/>
            <person name="Wong G.K.-S."/>
            <person name="Yang H."/>
        </authorList>
    </citation>
    <scope>NUCLEOTIDE SEQUENCE [LARGE SCALE GENOMIC DNA]</scope>
    <source>
        <strain>cv. Nipponbare</strain>
    </source>
</reference>
<protein>
    <recommendedName>
        <fullName evidence="4">Kinesin-like protein KIN-7G</fullName>
    </recommendedName>
</protein>
<sequence length="906" mass="101366">MASRHRRGAFPAGAKAAPEAEAAKESVAVAVRFRPLSPREVRRGEKIAWYADGETVARSEQSNLAYAYDRVFGPTTTTRHIYDAVAQYVVNGAMKGINGTIFAYGVTSSGKTHTMHGDQISPGVIPLAVKDIFNIIQETPNREFLLRVSYLEIYNEVVNDLLNPAGQNLRIREDLQGTIVEGIKEEAVLSPVHALSLIAAGEELRHVGSTNFNLLSSRSHTIFTLTIESSPRGQSNEAEAVTLSQLNLIDLAGSESSRVETAGVHQKEGSYINKSLLTLGKVISKLTDEKATHIPFRDSKLTRLLKSSLSGQGRVSLICTVTPASSNSEETHNTLKFAHRAKHIEIQATQNKIMDARSLIKKYQNEIRQLKEELEQLRRSIRTGTPIEDTMQKKHHLLETKEDCNVKLQSRLEQGEEAKAALLERIEHLTELILVSAKASRTTKSSHCPRRRHSFGEEELAYLPYERQDIILDNESNMLFVPIEGFGEKFKSSPKEETENQKGHLNWLNLRKCDSGSTNLTSSDGENPSSTKSLPALSTPLGIGFFNVTSEQRMSDYMLAENVPANLLCVGHREFPSDSLPVQETPLVSRKTSDHVDILREQFNILSGEVALHQSVLKRLSEEAGKNAMNEQIEMEMKVVNDEVKLNKQKIASLERRISNSMSNSRGMHDNLELSLPYIEIPEQLNEKAFQLEASECQEFLLSERTTFQHNTGIVQETGSQAHKGKPLPSDVSDEFLKKASQAEIDELKQRVSELTEAKSQLDSCNHKLLEESTYAKGLASVTSVELKALSVKVTKLMKQNERLSSELASGRNQRRGSHGPRGARRESHTKRYEPARRGDMNALEAMLKEKDQRQAELHTKIEESKQKEAFLEKELANMWTVLANLKKTRGIDQEDFDSKYNGSWA</sequence>
<dbReference type="EMBL" id="AP014962">
    <property type="protein sequence ID" value="BAS96703.1"/>
    <property type="status" value="ALT_SEQ"/>
    <property type="molecule type" value="Genomic_DNA"/>
</dbReference>
<dbReference type="EMBL" id="CM000143">
    <property type="protein sequence ID" value="EEE65294.1"/>
    <property type="molecule type" value="Genomic_DNA"/>
</dbReference>
<dbReference type="SMR" id="B9FS33"/>
<dbReference type="FunCoup" id="B9FS33">
    <property type="interactions" value="673"/>
</dbReference>
<dbReference type="STRING" id="39947.B9FS33"/>
<dbReference type="PaxDb" id="39947-B9FS33"/>
<dbReference type="eggNOG" id="KOG0242">
    <property type="taxonomic scope" value="Eukaryota"/>
</dbReference>
<dbReference type="InParanoid" id="B9FS33"/>
<dbReference type="Proteomes" id="UP000007752">
    <property type="component" value="Chromosome 6"/>
</dbReference>
<dbReference type="Proteomes" id="UP000059680">
    <property type="component" value="Chromosome 6"/>
</dbReference>
<dbReference type="GO" id="GO:0005737">
    <property type="term" value="C:cytoplasm"/>
    <property type="evidence" value="ECO:0000318"/>
    <property type="project" value="GO_Central"/>
</dbReference>
<dbReference type="GO" id="GO:0005871">
    <property type="term" value="C:kinesin complex"/>
    <property type="evidence" value="ECO:0000318"/>
    <property type="project" value="GO_Central"/>
</dbReference>
<dbReference type="GO" id="GO:0005874">
    <property type="term" value="C:microtubule"/>
    <property type="evidence" value="ECO:0000318"/>
    <property type="project" value="GO_Central"/>
</dbReference>
<dbReference type="GO" id="GO:0005524">
    <property type="term" value="F:ATP binding"/>
    <property type="evidence" value="ECO:0007669"/>
    <property type="project" value="UniProtKB-KW"/>
</dbReference>
<dbReference type="GO" id="GO:0016887">
    <property type="term" value="F:ATP hydrolysis activity"/>
    <property type="evidence" value="ECO:0000318"/>
    <property type="project" value="GO_Central"/>
</dbReference>
<dbReference type="GO" id="GO:0008017">
    <property type="term" value="F:microtubule binding"/>
    <property type="evidence" value="ECO:0000318"/>
    <property type="project" value="GO_Central"/>
</dbReference>
<dbReference type="GO" id="GO:0003777">
    <property type="term" value="F:microtubule motor activity"/>
    <property type="evidence" value="ECO:0000318"/>
    <property type="project" value="GO_Central"/>
</dbReference>
<dbReference type="GO" id="GO:0007018">
    <property type="term" value="P:microtubule-based movement"/>
    <property type="evidence" value="ECO:0000318"/>
    <property type="project" value="GO_Central"/>
</dbReference>
<dbReference type="CDD" id="cd01374">
    <property type="entry name" value="KISc_CENP_E"/>
    <property type="match status" value="1"/>
</dbReference>
<dbReference type="FunFam" id="3.40.850.10:FF:000014">
    <property type="entry name" value="Kinesin-like protein KIN-7G"/>
    <property type="match status" value="1"/>
</dbReference>
<dbReference type="Gene3D" id="3.40.850.10">
    <property type="entry name" value="Kinesin motor domain"/>
    <property type="match status" value="1"/>
</dbReference>
<dbReference type="InterPro" id="IPR027640">
    <property type="entry name" value="Kinesin-like_fam"/>
</dbReference>
<dbReference type="InterPro" id="IPR019821">
    <property type="entry name" value="Kinesin_motor_CS"/>
</dbReference>
<dbReference type="InterPro" id="IPR001752">
    <property type="entry name" value="Kinesin_motor_dom"/>
</dbReference>
<dbReference type="InterPro" id="IPR036961">
    <property type="entry name" value="Kinesin_motor_dom_sf"/>
</dbReference>
<dbReference type="InterPro" id="IPR027417">
    <property type="entry name" value="P-loop_NTPase"/>
</dbReference>
<dbReference type="PANTHER" id="PTHR47968">
    <property type="entry name" value="CENTROMERE PROTEIN E"/>
    <property type="match status" value="1"/>
</dbReference>
<dbReference type="PANTHER" id="PTHR47968:SF9">
    <property type="entry name" value="KINESIN-LIKE PROTEIN KIN-7K, CHLOROPLASTIC ISOFORM X1"/>
    <property type="match status" value="1"/>
</dbReference>
<dbReference type="Pfam" id="PF00225">
    <property type="entry name" value="Kinesin"/>
    <property type="match status" value="1"/>
</dbReference>
<dbReference type="PRINTS" id="PR00380">
    <property type="entry name" value="KINESINHEAVY"/>
</dbReference>
<dbReference type="SMART" id="SM00129">
    <property type="entry name" value="KISc"/>
    <property type="match status" value="1"/>
</dbReference>
<dbReference type="SUPFAM" id="SSF52540">
    <property type="entry name" value="P-loop containing nucleoside triphosphate hydrolases"/>
    <property type="match status" value="1"/>
</dbReference>
<dbReference type="PROSITE" id="PS00411">
    <property type="entry name" value="KINESIN_MOTOR_1"/>
    <property type="match status" value="1"/>
</dbReference>
<dbReference type="PROSITE" id="PS50067">
    <property type="entry name" value="KINESIN_MOTOR_2"/>
    <property type="match status" value="1"/>
</dbReference>
<comment type="similarity">
    <text evidence="4">Belongs to the TRAFAC class myosin-kinesin ATPase superfamily. Kinesin family. KIN-7 subfamily.</text>
</comment>
<comment type="sequence caution" evidence="4">
    <conflict type="erroneous gene model prediction">
        <sequence resource="EMBL-CDS" id="BAS96703"/>
    </conflict>
</comment>
<keyword id="KW-0067">ATP-binding</keyword>
<keyword id="KW-0175">Coiled coil</keyword>
<keyword id="KW-0493">Microtubule</keyword>
<keyword id="KW-0505">Motor protein</keyword>
<keyword id="KW-0547">Nucleotide-binding</keyword>
<keyword id="KW-1185">Reference proteome</keyword>
<feature type="chain" id="PRO_0000436628" description="Kinesin-like protein KIN-7G">
    <location>
        <begin position="1"/>
        <end position="906"/>
    </location>
</feature>
<feature type="domain" description="Kinesin motor" evidence="2">
    <location>
        <begin position="26"/>
        <end position="344"/>
    </location>
</feature>
<feature type="region of interest" description="Disordered" evidence="3">
    <location>
        <begin position="803"/>
        <end position="840"/>
    </location>
</feature>
<feature type="coiled-coil region" evidence="1">
    <location>
        <begin position="346"/>
        <end position="385"/>
    </location>
</feature>
<feature type="coiled-coil region" evidence="1">
    <location>
        <begin position="733"/>
        <end position="814"/>
    </location>
</feature>
<feature type="coiled-coil region" evidence="1">
    <location>
        <begin position="839"/>
        <end position="875"/>
    </location>
</feature>
<feature type="compositionally biased region" description="Basic residues" evidence="3">
    <location>
        <begin position="813"/>
        <end position="823"/>
    </location>
</feature>
<feature type="compositionally biased region" description="Basic and acidic residues" evidence="3">
    <location>
        <begin position="824"/>
        <end position="840"/>
    </location>
</feature>
<feature type="binding site" evidence="2">
    <location>
        <begin position="105"/>
        <end position="112"/>
    </location>
    <ligand>
        <name>ATP</name>
        <dbReference type="ChEBI" id="CHEBI:30616"/>
    </ligand>
</feature>
<name>KN7G_ORYSJ</name>
<proteinExistence type="inferred from homology"/>